<protein>
    <recommendedName>
        <fullName evidence="1">Eukaryotic translation initiation factor 3 subunit G</fullName>
        <shortName evidence="1">eIF3g</shortName>
    </recommendedName>
    <alternativeName>
        <fullName evidence="1">Eukaryotic translation initiation factor 3 RNA-binding subunit</fullName>
        <shortName evidence="1">eIF-3 RNA-binding subunit</shortName>
    </alternativeName>
    <alternativeName>
        <fullName evidence="1">Eukaryotic translation initiation factor 3 subunit 4</fullName>
    </alternativeName>
    <alternativeName>
        <fullName evidence="1">eIF-3-delta</fullName>
    </alternativeName>
    <alternativeName>
        <fullName evidence="1">eIF3 p42</fullName>
    </alternativeName>
    <alternativeName>
        <fullName evidence="1">eIF3 p44</fullName>
    </alternativeName>
</protein>
<comment type="function">
    <text evidence="1 8 11 13">RNA-binding component of the eukaryotic translation initiation factor 3 (eIF-3) complex, which is required for several steps in the initiation of protein synthesis (PubMed:17581632, PubMed:25849773, PubMed:27462815). The eIF-3 complex associates with the 40S ribosome and facilitates the recruitment of eIF-1, eIF-1A, eIF-2:GTP:methionyl-tRNAi and eIF-5 to form the 43S pre-initiation complex (43S PIC). The eIF-3 complex stimulates mRNA recruitment to the 43S PIC and scanning of the mRNA for AUG recognition. The eIF-3 complex is also required for disassembly and recycling of post-termination ribosomal complexes and subsequently prevents premature joining of the 40S and 60S ribosomal subunits prior to initiation (PubMed:17581632). The eIF-3 complex specifically targets and initiates translation of a subset of mRNAs involved in cell proliferation, including cell cycling, differentiation and apoptosis, and uses different modes of RNA stem-loop binding to exert either translational activation or repression (PubMed:25849773). This subunit can bind 18S rRNA.</text>
</comment>
<comment type="function">
    <text evidence="9">(Microbial infection) In case of FCV infection, plays a role in the ribosomal termination-reinitiation event leading to the translation of VP2 (PubMed:18056426).</text>
</comment>
<comment type="subunit">
    <text evidence="1 3 4 5 6 7 10 11 12 14 15">Component of the eukaryotic translation initiation factor 3 (eIF-3) complex, which is composed of 13 subunits: EIF3A, EIF3B, EIF3C, EIF3D, EIF3E, EIF3F, EIF3G, EIF3H, EIF3I, EIF3J, EIF3K, EIF3L and EIF3M. The eIF-3 complex appears to include 3 stable modules: module A is composed of EIF3A, EIF3B, EIF3G and EIF3I; module B is composed of EIF3F, EIF3H, and EIF3M; and module C is composed of EIF3C, EIF3D, EIF3E, EIF3K and EIF3L. EIF3C of module C binds EIF3B of module A and EIF3H of module B, thereby linking the three modules. EIF3J is a labile subunit that binds to the eIF-3 complex via EIF3B. The eIF-3 complex interacts with RPS6KB1 under conditions of nutrient depletion. Mitogenic stimulation leads to binding and activation of a complex composed of MTOR and RPTOR, leading to phosphorylation and release of RPS6KB1 and binding of EIF4B to eIF-3. Interacts (via C-terminus) with AIFM1 (via N-terminus). Interacts with DHX33; the interaction is independent of RNA (PubMed:26100019).</text>
</comment>
<comment type="interaction">
    <interactant intactId="EBI-366632">
        <id>O75821</id>
    </interactant>
    <interactant intactId="EBI-717666">
        <id>Q96AP0</id>
        <label>ACD</label>
    </interactant>
    <organismsDiffer>false</organismsDiffer>
    <experiments>2</experiments>
</comment>
<comment type="interaction">
    <interactant intactId="EBI-366632">
        <id>O75821</id>
    </interactant>
    <interactant intactId="EBI-356440">
        <id>O95831</id>
        <label>AIFM1</label>
    </interactant>
    <organismsDiffer>false</organismsDiffer>
    <experiments>9</experiments>
</comment>
<comment type="interaction">
    <interactant intactId="EBI-366632">
        <id>O75821</id>
    </interactant>
    <interactant intactId="EBI-366696">
        <id>P55884</id>
        <label>EIF3B</label>
    </interactant>
    <organismsDiffer>false</organismsDiffer>
    <experiments>15</experiments>
</comment>
<comment type="interaction">
    <interactant intactId="EBI-366632">
        <id>O75821</id>
    </interactant>
    <interactant intactId="EBI-354047">
        <id>Q13347</id>
        <label>EIF3I</label>
    </interactant>
    <organismsDiffer>false</organismsDiffer>
    <experiments>7</experiments>
</comment>
<comment type="interaction">
    <interactant intactId="EBI-366632">
        <id>O75821</id>
    </interactant>
    <interactant intactId="EBI-10175124">
        <id>Q8IZU0</id>
        <label>FAM9B</label>
    </interactant>
    <organismsDiffer>false</organismsDiffer>
    <experiments>3</experiments>
</comment>
<comment type="interaction">
    <interactant intactId="EBI-366632">
        <id>O75821</id>
    </interactant>
    <interactant intactId="EBI-618309">
        <id>Q08379</id>
        <label>GOLGA2</label>
    </interactant>
    <organismsDiffer>false</organismsDiffer>
    <experiments>3</experiments>
</comment>
<comment type="interaction">
    <interactant intactId="EBI-366632">
        <id>O75821</id>
    </interactant>
    <interactant intactId="EBI-466029">
        <id>P42858</id>
        <label>HTT</label>
    </interactant>
    <organismsDiffer>false</organismsDiffer>
    <experiments>4</experiments>
</comment>
<comment type="interaction">
    <interactant intactId="EBI-366632">
        <id>O75821</id>
    </interactant>
    <interactant intactId="EBI-16439278">
        <id>Q6FHY5</id>
        <label>MEOX2</label>
    </interactant>
    <organismsDiffer>false</organismsDiffer>
    <experiments>3</experiments>
</comment>
<comment type="interaction">
    <interactant intactId="EBI-366632">
        <id>O75821</id>
    </interactant>
    <interactant intactId="EBI-373498">
        <id>A9UHW6</id>
        <label>MIF4GD</label>
    </interactant>
    <organismsDiffer>false</organismsDiffer>
    <experiments>2</experiments>
</comment>
<comment type="interaction">
    <interactant intactId="EBI-366632">
        <id>O75821</id>
    </interactant>
    <interactant intactId="EBI-9118295">
        <id>A9UHW6-2</id>
        <label>MIF4GD</label>
    </interactant>
    <organismsDiffer>false</organismsDiffer>
    <experiments>3</experiments>
</comment>
<comment type="interaction">
    <interactant intactId="EBI-366632">
        <id>O75821</id>
    </interactant>
    <interactant intactId="EBI-1043580">
        <id>Q9BRX2</id>
        <label>PELO</label>
    </interactant>
    <organismsDiffer>false</organismsDiffer>
    <experiments>6</experiments>
</comment>
<comment type="interaction">
    <interactant intactId="EBI-366632">
        <id>O75821</id>
    </interactant>
    <interactant intactId="EBI-1752330">
        <id>Q9BYB0</id>
        <label>SHANK3</label>
    </interactant>
    <organismsDiffer>false</organismsDiffer>
    <experiments>2</experiments>
</comment>
<comment type="subcellular location">
    <subcellularLocation>
        <location evidence="1">Cytoplasm</location>
    </subcellularLocation>
    <subcellularLocation>
        <location evidence="1 6">Nucleus</location>
    </subcellularLocation>
    <subcellularLocation>
        <location evidence="1 6">Cytoplasm</location>
        <location evidence="1 6">Perinuclear region</location>
    </subcellularLocation>
    <text>Colocalizes with AIFM1 in the nucleus and perinuclear region.</text>
</comment>
<comment type="PTM">
    <text evidence="1 7">Phosphorylated. Phosphorylation is enhanced upon serum stimulation.</text>
</comment>
<comment type="mass spectrometry"/>
<comment type="mass spectrometry"/>
<comment type="similarity">
    <text evidence="1">Belongs to the eIF-3 subunit G family.</text>
</comment>
<feature type="initiator methionine" description="Removed" evidence="1 7">
    <location>
        <position position="1"/>
    </location>
</feature>
<feature type="chain" id="PRO_0000123510" description="Eukaryotic translation initiation factor 3 subunit G">
    <location>
        <begin position="2"/>
        <end position="320"/>
    </location>
</feature>
<feature type="domain" description="RRM" evidence="1">
    <location>
        <begin position="239"/>
        <end position="317"/>
    </location>
</feature>
<feature type="region of interest" description="Disordered" evidence="2">
    <location>
        <begin position="1"/>
        <end position="59"/>
    </location>
</feature>
<feature type="region of interest" description="Disordered" evidence="2">
    <location>
        <begin position="209"/>
        <end position="234"/>
    </location>
</feature>
<feature type="compositionally biased region" description="Basic and acidic residues" evidence="2">
    <location>
        <begin position="221"/>
        <end position="234"/>
    </location>
</feature>
<feature type="modified residue" description="Phosphoserine" evidence="19">
    <location>
        <position position="8"/>
    </location>
</feature>
<feature type="modified residue" description="Phosphoserine" evidence="20">
    <location>
        <position position="11"/>
    </location>
</feature>
<feature type="modified residue" description="Phosphothreonine" evidence="17 18 19">
    <location>
        <position position="38"/>
    </location>
</feature>
<feature type="modified residue" description="Phosphothreonine" evidence="1 7 17 18">
    <location>
        <position position="41"/>
    </location>
</feature>
<feature type="modified residue" description="Phosphoserine" evidence="1 7 17 18">
    <location>
        <position position="42"/>
    </location>
</feature>
<feature type="modified residue" description="Phosphoserine" evidence="20">
    <location>
        <position position="189"/>
    </location>
</feature>
<feature type="modified residue" description="Phosphoserine" evidence="19">
    <location>
        <position position="223"/>
    </location>
</feature>
<feature type="modified residue" description="Phosphoserine" evidence="19">
    <location>
        <position position="264"/>
    </location>
</feature>
<feature type="sequence conflict" description="In Ref. 1; AAC78728." evidence="16" ref="1">
    <original>A</original>
    <variation>R</variation>
    <location>
        <position position="293"/>
    </location>
</feature>
<feature type="strand" evidence="22">
    <location>
        <begin position="158"/>
        <end position="160"/>
    </location>
</feature>
<feature type="strand" evidence="22">
    <location>
        <begin position="162"/>
        <end position="164"/>
    </location>
</feature>
<feature type="helix" evidence="22">
    <location>
        <begin position="173"/>
        <end position="175"/>
    </location>
</feature>
<feature type="strand" evidence="23">
    <location>
        <begin position="241"/>
        <end position="245"/>
    </location>
</feature>
<feature type="helix" evidence="23">
    <location>
        <begin position="252"/>
        <end position="259"/>
    </location>
</feature>
<feature type="helix" evidence="23">
    <location>
        <begin position="260"/>
        <end position="262"/>
    </location>
</feature>
<feature type="strand" evidence="23">
    <location>
        <begin position="266"/>
        <end position="273"/>
    </location>
</feature>
<feature type="strand" evidence="23">
    <location>
        <begin position="276"/>
        <end position="286"/>
    </location>
</feature>
<feature type="helix" evidence="23">
    <location>
        <begin position="292"/>
        <end position="296"/>
    </location>
</feature>
<feature type="turn" evidence="23">
    <location>
        <begin position="297"/>
        <end position="299"/>
    </location>
</feature>
<feature type="strand" evidence="23">
    <location>
        <begin position="300"/>
        <end position="305"/>
    </location>
</feature>
<feature type="strand" evidence="23">
    <location>
        <begin position="308"/>
        <end position="310"/>
    </location>
</feature>
<feature type="strand" evidence="21">
    <location>
        <begin position="311"/>
        <end position="316"/>
    </location>
</feature>
<dbReference type="EMBL" id="U96074">
    <property type="protein sequence ID" value="AAC78728.1"/>
    <property type="molecule type" value="mRNA"/>
</dbReference>
<dbReference type="EMBL" id="AF020833">
    <property type="protein sequence ID" value="AAB71866.1"/>
    <property type="molecule type" value="mRNA"/>
</dbReference>
<dbReference type="EMBL" id="AF092453">
    <property type="protein sequence ID" value="AAG15396.1"/>
    <property type="molecule type" value="Genomic_DNA"/>
</dbReference>
<dbReference type="EMBL" id="AF094850">
    <property type="protein sequence ID" value="AAG15419.1"/>
    <property type="molecule type" value="mRNA"/>
</dbReference>
<dbReference type="EMBL" id="BT006889">
    <property type="protein sequence ID" value="AAP35535.1"/>
    <property type="molecule type" value="mRNA"/>
</dbReference>
<dbReference type="EMBL" id="BC000733">
    <property type="protein sequence ID" value="AAH00733.1"/>
    <property type="molecule type" value="mRNA"/>
</dbReference>
<dbReference type="EMBL" id="BC008469">
    <property type="protein sequence ID" value="AAH08469.1"/>
    <property type="molecule type" value="mRNA"/>
</dbReference>
<dbReference type="CCDS" id="CCDS12227.1"/>
<dbReference type="RefSeq" id="NP_003746.2">
    <property type="nucleotide sequence ID" value="NM_003755.4"/>
</dbReference>
<dbReference type="PDB" id="2CQ0">
    <property type="method" value="NMR"/>
    <property type="chains" value="A=231-320"/>
</dbReference>
<dbReference type="PDB" id="2MJC">
    <property type="method" value="NMR"/>
    <property type="chains" value="A=150-179"/>
</dbReference>
<dbReference type="PDB" id="5K0Y">
    <property type="method" value="EM"/>
    <property type="resolution" value="5.80 A"/>
    <property type="chains" value="M=103-140, O=239-315"/>
</dbReference>
<dbReference type="PDB" id="6YBS">
    <property type="method" value="EM"/>
    <property type="resolution" value="3.10 A"/>
    <property type="chains" value="o=1-320"/>
</dbReference>
<dbReference type="PDB" id="6ZMW">
    <property type="method" value="EM"/>
    <property type="resolution" value="3.70 A"/>
    <property type="chains" value="o=1-320"/>
</dbReference>
<dbReference type="PDB" id="7QP6">
    <property type="method" value="EM"/>
    <property type="resolution" value="4.70 A"/>
    <property type="chains" value="o=1-320"/>
</dbReference>
<dbReference type="PDB" id="7QP7">
    <property type="method" value="EM"/>
    <property type="resolution" value="3.70 A"/>
    <property type="chains" value="o=1-320"/>
</dbReference>
<dbReference type="PDB" id="8OZ0">
    <property type="method" value="EM"/>
    <property type="resolution" value="3.50 A"/>
    <property type="chains" value="7=1-320"/>
</dbReference>
<dbReference type="PDB" id="8PJ1">
    <property type="method" value="EM"/>
    <property type="resolution" value="3.40 A"/>
    <property type="chains" value="o=1-320"/>
</dbReference>
<dbReference type="PDB" id="8PJ2">
    <property type="method" value="EM"/>
    <property type="resolution" value="3.40 A"/>
    <property type="chains" value="o=1-320"/>
</dbReference>
<dbReference type="PDB" id="8PJ3">
    <property type="method" value="EM"/>
    <property type="resolution" value="3.70 A"/>
    <property type="chains" value="o=1-320"/>
</dbReference>
<dbReference type="PDB" id="8PJ4">
    <property type="method" value="EM"/>
    <property type="resolution" value="3.20 A"/>
    <property type="chains" value="o=1-320"/>
</dbReference>
<dbReference type="PDB" id="8PJ5">
    <property type="method" value="EM"/>
    <property type="resolution" value="2.90 A"/>
    <property type="chains" value="o=1-320"/>
</dbReference>
<dbReference type="PDB" id="8PJ6">
    <property type="method" value="EM"/>
    <property type="resolution" value="2.90 A"/>
    <property type="chains" value="o=1-320"/>
</dbReference>
<dbReference type="PDB" id="8PPL">
    <property type="method" value="EM"/>
    <property type="resolution" value="2.65 A"/>
    <property type="chains" value="Io=1-320"/>
</dbReference>
<dbReference type="PDB" id="8XXM">
    <property type="method" value="EM"/>
    <property type="resolution" value="3.20 A"/>
    <property type="chains" value="3G=1-320"/>
</dbReference>
<dbReference type="PDB" id="8XXN">
    <property type="method" value="EM"/>
    <property type="resolution" value="3.60 A"/>
    <property type="chains" value="3G=1-320"/>
</dbReference>
<dbReference type="PDB" id="9BLN">
    <property type="method" value="EM"/>
    <property type="resolution" value="3.90 A"/>
    <property type="chains" value="o=1-320"/>
</dbReference>
<dbReference type="PDBsum" id="2CQ0"/>
<dbReference type="PDBsum" id="2MJC"/>
<dbReference type="PDBsum" id="5K0Y"/>
<dbReference type="PDBsum" id="6YBS"/>
<dbReference type="PDBsum" id="6ZMW"/>
<dbReference type="PDBsum" id="7QP6"/>
<dbReference type="PDBsum" id="7QP7"/>
<dbReference type="PDBsum" id="8OZ0"/>
<dbReference type="PDBsum" id="8PJ1"/>
<dbReference type="PDBsum" id="8PJ2"/>
<dbReference type="PDBsum" id="8PJ3"/>
<dbReference type="PDBsum" id="8PJ4"/>
<dbReference type="PDBsum" id="8PJ5"/>
<dbReference type="PDBsum" id="8PJ6"/>
<dbReference type="PDBsum" id="8PPL"/>
<dbReference type="PDBsum" id="8XXM"/>
<dbReference type="PDBsum" id="8XXN"/>
<dbReference type="PDBsum" id="9BLN"/>
<dbReference type="BMRB" id="O75821"/>
<dbReference type="EMDB" id="EMD-10772"/>
<dbReference type="EMDB" id="EMD-11302"/>
<dbReference type="EMDB" id="EMD-14113"/>
<dbReference type="EMDB" id="EMD-14114"/>
<dbReference type="EMDB" id="EMD-17297"/>
<dbReference type="EMDB" id="EMD-17696"/>
<dbReference type="EMDB" id="EMD-17697"/>
<dbReference type="EMDB" id="EMD-17698"/>
<dbReference type="EMDB" id="EMD-17699"/>
<dbReference type="EMDB" id="EMD-17700"/>
<dbReference type="EMDB" id="EMD-17701"/>
<dbReference type="EMDB" id="EMD-17805"/>
<dbReference type="EMDB" id="EMD-38753"/>
<dbReference type="EMDB" id="EMD-38754"/>
<dbReference type="EMDB" id="EMD-44671"/>
<dbReference type="EMDB" id="EMD-8190"/>
<dbReference type="SMR" id="O75821"/>
<dbReference type="BioGRID" id="114215">
    <property type="interactions" value="258"/>
</dbReference>
<dbReference type="ComplexPortal" id="CPX-6036">
    <property type="entry name" value="Eukaryotic translation initiation factor 3 complex"/>
</dbReference>
<dbReference type="CORUM" id="O75821"/>
<dbReference type="DIP" id="DIP-31115N"/>
<dbReference type="ELM" id="O75821"/>
<dbReference type="FunCoup" id="O75821">
    <property type="interactions" value="2586"/>
</dbReference>
<dbReference type="IntAct" id="O75821">
    <property type="interactions" value="382"/>
</dbReference>
<dbReference type="MINT" id="O75821"/>
<dbReference type="STRING" id="9606.ENSP00000253108"/>
<dbReference type="MoonProt" id="O75821"/>
<dbReference type="GlyCosmos" id="O75821">
    <property type="glycosylation" value="3 sites, 2 glycans"/>
</dbReference>
<dbReference type="GlyGen" id="O75821">
    <property type="glycosylation" value="7 sites, 1 N-linked glycan (1 site), 2 O-linked glycans (6 sites)"/>
</dbReference>
<dbReference type="iPTMnet" id="O75821"/>
<dbReference type="MetOSite" id="O75821"/>
<dbReference type="PhosphoSitePlus" id="O75821"/>
<dbReference type="SwissPalm" id="O75821"/>
<dbReference type="BioMuta" id="EIF3G"/>
<dbReference type="jPOST" id="O75821"/>
<dbReference type="MassIVE" id="O75821"/>
<dbReference type="PaxDb" id="9606-ENSP00000253108"/>
<dbReference type="PeptideAtlas" id="O75821"/>
<dbReference type="ProteomicsDB" id="50214"/>
<dbReference type="Pumba" id="O75821"/>
<dbReference type="TopDownProteomics" id="O75821"/>
<dbReference type="Antibodypedia" id="12724">
    <property type="antibodies" value="275 antibodies from 30 providers"/>
</dbReference>
<dbReference type="DNASU" id="8666"/>
<dbReference type="Ensembl" id="ENST00000253108.9">
    <property type="protein sequence ID" value="ENSP00000253108.3"/>
    <property type="gene ID" value="ENSG00000130811.12"/>
</dbReference>
<dbReference type="GeneID" id="8666"/>
<dbReference type="KEGG" id="hsa:8666"/>
<dbReference type="MANE-Select" id="ENST00000253108.9">
    <property type="protein sequence ID" value="ENSP00000253108.3"/>
    <property type="RefSeq nucleotide sequence ID" value="NM_003755.5"/>
    <property type="RefSeq protein sequence ID" value="NP_003746.2"/>
</dbReference>
<dbReference type="UCSC" id="uc002mnd.4">
    <property type="organism name" value="human"/>
</dbReference>
<dbReference type="AGR" id="HGNC:3274"/>
<dbReference type="CTD" id="8666"/>
<dbReference type="DisGeNET" id="8666"/>
<dbReference type="GeneCards" id="EIF3G"/>
<dbReference type="HGNC" id="HGNC:3274">
    <property type="gene designation" value="EIF3G"/>
</dbReference>
<dbReference type="HPA" id="ENSG00000130811">
    <property type="expression patterns" value="Low tissue specificity"/>
</dbReference>
<dbReference type="MalaCards" id="EIF3G"/>
<dbReference type="MIM" id="603913">
    <property type="type" value="gene"/>
</dbReference>
<dbReference type="neXtProt" id="NX_O75821"/>
<dbReference type="OpenTargets" id="ENSG00000130811"/>
<dbReference type="PharmGKB" id="PA162384827"/>
<dbReference type="VEuPathDB" id="HostDB:ENSG00000130811"/>
<dbReference type="eggNOG" id="KOG0122">
    <property type="taxonomic scope" value="Eukaryota"/>
</dbReference>
<dbReference type="GeneTree" id="ENSGT00510000047802"/>
<dbReference type="HOGENOM" id="CLU_034595_0_0_1"/>
<dbReference type="InParanoid" id="O75821"/>
<dbReference type="OMA" id="ICQGDHF"/>
<dbReference type="OrthoDB" id="1749473at2759"/>
<dbReference type="PAN-GO" id="O75821">
    <property type="GO annotations" value="0 GO annotations based on evolutionary models"/>
</dbReference>
<dbReference type="PhylomeDB" id="O75821"/>
<dbReference type="TreeFam" id="TF101516"/>
<dbReference type="PathwayCommons" id="O75821"/>
<dbReference type="Reactome" id="R-HSA-156827">
    <property type="pathway name" value="L13a-mediated translational silencing of Ceruloplasmin expression"/>
</dbReference>
<dbReference type="Reactome" id="R-HSA-72649">
    <property type="pathway name" value="Translation initiation complex formation"/>
</dbReference>
<dbReference type="Reactome" id="R-HSA-72689">
    <property type="pathway name" value="Formation of a pool of free 40S subunits"/>
</dbReference>
<dbReference type="Reactome" id="R-HSA-72695">
    <property type="pathway name" value="Formation of the ternary complex, and subsequently, the 43S complex"/>
</dbReference>
<dbReference type="Reactome" id="R-HSA-72702">
    <property type="pathway name" value="Ribosomal scanning and start codon recognition"/>
</dbReference>
<dbReference type="Reactome" id="R-HSA-72706">
    <property type="pathway name" value="GTP hydrolysis and joining of the 60S ribosomal subunit"/>
</dbReference>
<dbReference type="SignaLink" id="O75821"/>
<dbReference type="SIGNOR" id="O75821"/>
<dbReference type="BioGRID-ORCS" id="8666">
    <property type="hits" value="727 hits in 1162 CRISPR screens"/>
</dbReference>
<dbReference type="CD-CODE" id="DEE660B4">
    <property type="entry name" value="Stress granule"/>
</dbReference>
<dbReference type="ChiTaRS" id="EIF3G">
    <property type="organism name" value="human"/>
</dbReference>
<dbReference type="EvolutionaryTrace" id="O75821"/>
<dbReference type="GeneWiki" id="EIF3G"/>
<dbReference type="GenomeRNAi" id="8666"/>
<dbReference type="Pharos" id="O75821">
    <property type="development level" value="Tbio"/>
</dbReference>
<dbReference type="PRO" id="PR:O75821"/>
<dbReference type="Proteomes" id="UP000005640">
    <property type="component" value="Chromosome 19"/>
</dbReference>
<dbReference type="RNAct" id="O75821">
    <property type="molecule type" value="protein"/>
</dbReference>
<dbReference type="Bgee" id="ENSG00000130811">
    <property type="expression patterns" value="Expressed in granulocyte and 209 other cell types or tissues"/>
</dbReference>
<dbReference type="ExpressionAtlas" id="O75821">
    <property type="expression patterns" value="baseline and differential"/>
</dbReference>
<dbReference type="GO" id="GO:0005737">
    <property type="term" value="C:cytoplasm"/>
    <property type="evidence" value="ECO:0000314"/>
    <property type="project" value="UniProtKB"/>
</dbReference>
<dbReference type="GO" id="GO:0005829">
    <property type="term" value="C:cytosol"/>
    <property type="evidence" value="ECO:0000314"/>
    <property type="project" value="HPA"/>
</dbReference>
<dbReference type="GO" id="GO:0016282">
    <property type="term" value="C:eukaryotic 43S preinitiation complex"/>
    <property type="evidence" value="ECO:0007669"/>
    <property type="project" value="UniProtKB-UniRule"/>
</dbReference>
<dbReference type="GO" id="GO:0033290">
    <property type="term" value="C:eukaryotic 48S preinitiation complex"/>
    <property type="evidence" value="ECO:0007669"/>
    <property type="project" value="UniProtKB-UniRule"/>
</dbReference>
<dbReference type="GO" id="GO:0005852">
    <property type="term" value="C:eukaryotic translation initiation factor 3 complex"/>
    <property type="evidence" value="ECO:0000314"/>
    <property type="project" value="UniProtKB"/>
</dbReference>
<dbReference type="GO" id="GO:0048471">
    <property type="term" value="C:perinuclear region of cytoplasm"/>
    <property type="evidence" value="ECO:0007669"/>
    <property type="project" value="UniProtKB-SubCell"/>
</dbReference>
<dbReference type="GO" id="GO:0003723">
    <property type="term" value="F:RNA binding"/>
    <property type="evidence" value="ECO:0000314"/>
    <property type="project" value="UniProtKB"/>
</dbReference>
<dbReference type="GO" id="GO:0003743">
    <property type="term" value="F:translation initiation factor activity"/>
    <property type="evidence" value="ECO:0007669"/>
    <property type="project" value="UniProtKB-UniRule"/>
</dbReference>
<dbReference type="GO" id="GO:0001732">
    <property type="term" value="P:formation of cytoplasmic translation initiation complex"/>
    <property type="evidence" value="ECO:0000303"/>
    <property type="project" value="ComplexPortal"/>
</dbReference>
<dbReference type="GO" id="GO:0006413">
    <property type="term" value="P:translational initiation"/>
    <property type="evidence" value="ECO:0000314"/>
    <property type="project" value="UniProtKB"/>
</dbReference>
<dbReference type="GO" id="GO:0075525">
    <property type="term" value="P:viral translational termination-reinitiation"/>
    <property type="evidence" value="ECO:0000314"/>
    <property type="project" value="UniProtKB"/>
</dbReference>
<dbReference type="CDD" id="cd12933">
    <property type="entry name" value="eIF3G"/>
    <property type="match status" value="1"/>
</dbReference>
<dbReference type="CDD" id="cd12408">
    <property type="entry name" value="RRM_eIF3G_like"/>
    <property type="match status" value="1"/>
</dbReference>
<dbReference type="FunFam" id="3.30.70.330:FF:000194">
    <property type="entry name" value="Eukaryotic translation initiation factor 3 subunit G"/>
    <property type="match status" value="1"/>
</dbReference>
<dbReference type="Gene3D" id="3.30.70.330">
    <property type="match status" value="1"/>
</dbReference>
<dbReference type="HAMAP" id="MF_03006">
    <property type="entry name" value="eIF3g"/>
    <property type="match status" value="1"/>
</dbReference>
<dbReference type="InterPro" id="IPR017334">
    <property type="entry name" value="eIF3_g"/>
</dbReference>
<dbReference type="InterPro" id="IPR024675">
    <property type="entry name" value="eIF3g_N"/>
</dbReference>
<dbReference type="InterPro" id="IPR034240">
    <property type="entry name" value="eIF3G_RRM"/>
</dbReference>
<dbReference type="InterPro" id="IPR012677">
    <property type="entry name" value="Nucleotide-bd_a/b_plait_sf"/>
</dbReference>
<dbReference type="InterPro" id="IPR035979">
    <property type="entry name" value="RBD_domain_sf"/>
</dbReference>
<dbReference type="InterPro" id="IPR000504">
    <property type="entry name" value="RRM_dom"/>
</dbReference>
<dbReference type="PANTHER" id="PTHR10352">
    <property type="entry name" value="EUKARYOTIC TRANSLATION INITIATION FACTOR 3 SUBUNIT G"/>
    <property type="match status" value="1"/>
</dbReference>
<dbReference type="Pfam" id="PF12353">
    <property type="entry name" value="eIF3g"/>
    <property type="match status" value="1"/>
</dbReference>
<dbReference type="Pfam" id="PF00076">
    <property type="entry name" value="RRM_1"/>
    <property type="match status" value="1"/>
</dbReference>
<dbReference type="PIRSF" id="PIRSF037949">
    <property type="entry name" value="Transl_init_eIF-3_RNA-bind"/>
    <property type="match status" value="1"/>
</dbReference>
<dbReference type="SMART" id="SM00360">
    <property type="entry name" value="RRM"/>
    <property type="match status" value="1"/>
</dbReference>
<dbReference type="SUPFAM" id="SSF54928">
    <property type="entry name" value="RNA-binding domain, RBD"/>
    <property type="match status" value="1"/>
</dbReference>
<dbReference type="PROSITE" id="PS50102">
    <property type="entry name" value="RRM"/>
    <property type="match status" value="1"/>
</dbReference>
<name>EIF3G_HUMAN</name>
<gene>
    <name evidence="1" type="primary">EIF3G</name>
    <name evidence="1" type="synonym">EIF3S4</name>
</gene>
<proteinExistence type="evidence at protein level"/>
<reference key="1">
    <citation type="journal article" date="1998" name="J. Biol. Chem.">
        <title>Characterization of cDNAs encoding the p44 and p35 subunits of human translation initiation factor eIF3.</title>
        <authorList>
            <person name="Block K.L."/>
            <person name="Vornlocher H.-P."/>
            <person name="Hershey J.W.B."/>
        </authorList>
    </citation>
    <scope>NUCLEOTIDE SEQUENCE [MRNA]</scope>
    <scope>INTERACTION WITH EIF3A</scope>
    <scope>RNA-BINDING</scope>
</reference>
<reference key="2">
    <citation type="journal article" date="1999" name="Nucleic Acids Res.">
        <title>Cloning and characterization of the p42 subunit of mammalian translation initiation factor 3 (eIF3): demonstration that eIF3 interacts with eIF5 in mammalian cells.</title>
        <authorList>
            <person name="Bandyopadhyay A."/>
            <person name="Maitra U."/>
        </authorList>
    </citation>
    <scope>NUCLEOTIDE SEQUENCE [MRNA]</scope>
    <scope>PARTIAL PROTEIN SEQUENCE</scope>
    <scope>INTERACTION WITH EIF5</scope>
    <scope>RNA-BINDING</scope>
</reference>
<reference key="3">
    <citation type="submission" date="1998-09" db="EMBL/GenBank/DDBJ databases">
        <title>Molecular cloning, genomic structure and chromosomal localization of a novel human RNA binding protein gene homologous to a tumor necrosis factor alpha inducible transcript in mouse.</title>
        <authorList>
            <person name="Chen W."/>
            <person name="Blough R.I."/>
            <person name="Winkelmann J.C."/>
        </authorList>
    </citation>
    <scope>NUCLEOTIDE SEQUENCE [GENOMIC DNA / MRNA]</scope>
</reference>
<reference key="4">
    <citation type="submission" date="2003-05" db="EMBL/GenBank/DDBJ databases">
        <title>Cloning of human full-length CDSs in BD Creator(TM) system donor vector.</title>
        <authorList>
            <person name="Kalnine N."/>
            <person name="Chen X."/>
            <person name="Rolfs A."/>
            <person name="Halleck A."/>
            <person name="Hines L."/>
            <person name="Eisenstein S."/>
            <person name="Koundinya M."/>
            <person name="Raphael J."/>
            <person name="Moreira D."/>
            <person name="Kelley T."/>
            <person name="LaBaer J."/>
            <person name="Lin Y."/>
            <person name="Phelan M."/>
            <person name="Farmer A."/>
        </authorList>
    </citation>
    <scope>NUCLEOTIDE SEQUENCE [LARGE SCALE MRNA]</scope>
</reference>
<reference key="5">
    <citation type="journal article" date="2004" name="Genome Res.">
        <title>The status, quality, and expansion of the NIH full-length cDNA project: the Mammalian Gene Collection (MGC).</title>
        <authorList>
            <consortium name="The MGC Project Team"/>
        </authorList>
    </citation>
    <scope>NUCLEOTIDE SEQUENCE [LARGE SCALE MRNA]</scope>
    <source>
        <tissue>Brain</tissue>
        <tissue>Placenta</tissue>
    </source>
</reference>
<reference key="6">
    <citation type="journal article" date="2003" name="Eur. J. Biochem.">
        <title>Characterization of eIF3k: a newly discovered subunit of mammalian translation initiation factor eIF3.</title>
        <authorList>
            <person name="Mayeur G.L."/>
            <person name="Fraser C.S."/>
            <person name="Peiretti F."/>
            <person name="Block K.L."/>
            <person name="Hershey J.W.B."/>
        </authorList>
    </citation>
    <scope>INTERACTION WITH EIF3B</scope>
</reference>
<reference key="7">
    <citation type="journal article" date="2004" name="J. Biol. Chem.">
        <title>The j-subunit of human translation initiation factor eIF3 is required for the stable binding of eIF3 and its subcomplexes to 40 S ribosomal subunits in vitro.</title>
        <authorList>
            <person name="Fraser C.S."/>
            <person name="Lee J.Y."/>
            <person name="Mayeur G.L."/>
            <person name="Bushell M."/>
            <person name="Doudna J.A."/>
            <person name="Hershey J.W.B."/>
        </authorList>
    </citation>
    <scope>INTERACTION WITH EIF3B</scope>
</reference>
<reference key="8">
    <citation type="journal article" date="2005" name="RNA">
        <title>Binding of eukaryotic initiation factor 3 to ribosomal 40S subunits and its role in ribosomal dissociation and anti-association.</title>
        <authorList>
            <person name="Kolupaeva V.G."/>
            <person name="Unbehaun A."/>
            <person name="Lomakin I.B."/>
            <person name="Hellen C.U.T."/>
            <person name="Pestova T.V."/>
        </authorList>
    </citation>
    <scope>CHARACTERIZATION OF THE EIF-3 COMPLEX</scope>
</reference>
<reference key="9">
    <citation type="journal article" date="2006" name="Cell">
        <title>Global, in vivo, and site-specific phosphorylation dynamics in signaling networks.</title>
        <authorList>
            <person name="Olsen J.V."/>
            <person name="Blagoev B."/>
            <person name="Gnad F."/>
            <person name="Macek B."/>
            <person name="Kumar C."/>
            <person name="Mortensen P."/>
            <person name="Mann M."/>
        </authorList>
    </citation>
    <scope>IDENTIFICATION BY MASS SPECTROMETRY [LARGE SCALE ANALYSIS]</scope>
    <source>
        <tissue>Cervix carcinoma</tissue>
    </source>
</reference>
<reference key="10">
    <citation type="journal article" date="2006" name="FEBS Lett.">
        <title>Apoptosis-inducing factor (AIF) inhibits protein synthesis by interacting with the eukaryotic translation initiation factor 3 subunit p44 (eIF3g).</title>
        <authorList>
            <person name="Kim J.T."/>
            <person name="Kim K.D."/>
            <person name="Song E.Y."/>
            <person name="Lee H.G."/>
            <person name="Kim J.W."/>
            <person name="Kim J.W."/>
            <person name="Chae S.K."/>
            <person name="Kim E."/>
            <person name="Lee M.S."/>
            <person name="Yang Y."/>
            <person name="Lim J.S."/>
        </authorList>
    </citation>
    <scope>SUBCELLULAR LOCATION</scope>
    <scope>INTERACTION WITH AIFM1</scope>
</reference>
<reference key="11">
    <citation type="journal article" date="2006" name="J. Biol. Chem.">
        <title>Translation initiation factor eIF4G-1 binds to eIF3 through the eIF3e subunit.</title>
        <authorList>
            <person name="LeFebvre A.K."/>
            <person name="Korneeva N.L."/>
            <person name="Trutschl M."/>
            <person name="Cvek U."/>
            <person name="Duzan R.D."/>
            <person name="Bradley C.A."/>
            <person name="Hershey J.W.B."/>
            <person name="Rhoads R.E."/>
        </authorList>
    </citation>
    <scope>IDENTIFICATION IN THE EIF-3 COMPLEX</scope>
    <scope>IDENTIFICATION BY MASS SPECTROMETRY</scope>
</reference>
<reference key="12">
    <citation type="journal article" date="2007" name="EMBO J.">
        <title>Reconstitution reveals the functional core of mammalian eIF3.</title>
        <authorList>
            <person name="Masutani M."/>
            <person name="Sonenberg N."/>
            <person name="Yokoyama S."/>
            <person name="Imataka H."/>
        </authorList>
    </citation>
    <scope>FUNCTION</scope>
    <scope>CHARACTERIZATION OF THE EIF-3 COMPLEX</scope>
</reference>
<reference key="13">
    <citation type="journal article" date="2007" name="Mol. Cell. Proteomics">
        <title>Structural characterization of the human eukaryotic initiation factor 3 protein complex by mass spectrometry.</title>
        <authorList>
            <person name="Damoc E."/>
            <person name="Fraser C.S."/>
            <person name="Zhou M."/>
            <person name="Videler H."/>
            <person name="Mayeur G.L."/>
            <person name="Hershey J.W.B."/>
            <person name="Doudna J.A."/>
            <person name="Robinson C.V."/>
            <person name="Leary J.A."/>
        </authorList>
    </citation>
    <scope>IDENTIFICATION IN THE EIF-3 COMPLEX</scope>
    <scope>CHARACTERIZATION OF THE EIF-3 COMPLEX</scope>
    <scope>CLEAVAGE OF INITIATOR METHIONINE</scope>
    <scope>PHOSPHORYLATION AT THR-41 AND SER-42</scope>
    <scope>MASS SPECTROMETRY</scope>
</reference>
<reference key="14">
    <citation type="journal article" date="2007" name="Genes Dev.">
        <title>The mechanism of an exceptional case of reinitiation after translation of a long ORF reveals why such events do not generally occur in mammalian mRNA translation.</title>
        <authorList>
            <person name="Poyry T.A."/>
            <person name="Kaminski A."/>
            <person name="Connell E.J."/>
            <person name="Fraser C.S."/>
            <person name="Jackson R.J."/>
        </authorList>
    </citation>
    <scope>FUNCTION (MICROBIAL INFECTION)</scope>
</reference>
<reference key="15">
    <citation type="journal article" date="2008" name="Proc. Natl. Acad. Sci. U.S.A.">
        <title>A quantitative atlas of mitotic phosphorylation.</title>
        <authorList>
            <person name="Dephoure N."/>
            <person name="Zhou C."/>
            <person name="Villen J."/>
            <person name="Beausoleil S.A."/>
            <person name="Bakalarski C.E."/>
            <person name="Elledge S.J."/>
            <person name="Gygi S.P."/>
        </authorList>
    </citation>
    <scope>PHOSPHORYLATION [LARGE SCALE ANALYSIS] AT THR-38; THR-41 AND SER-42</scope>
    <scope>IDENTIFICATION BY MASS SPECTROMETRY [LARGE SCALE ANALYSIS]</scope>
    <source>
        <tissue>Cervix carcinoma</tissue>
    </source>
</reference>
<reference key="16">
    <citation type="journal article" date="2008" name="Proc. Natl. Acad. Sci. U.S.A.">
        <title>Mass spectrometry reveals modularity and a complete subunit interaction map of the eukaryotic translation factor eIF3.</title>
        <authorList>
            <person name="Zhou M."/>
            <person name="Sandercock A.M."/>
            <person name="Fraser C.S."/>
            <person name="Ridlova G."/>
            <person name="Stephens E."/>
            <person name="Schenauer M.R."/>
            <person name="Yokoi-Fong T."/>
            <person name="Barsky D."/>
            <person name="Leary J.A."/>
            <person name="Hershey J.W.B."/>
            <person name="Doudna J.A."/>
            <person name="Robinson C.V."/>
        </authorList>
    </citation>
    <scope>IDENTIFICATION IN THE EIF-3 COMPLEX</scope>
    <scope>CHARACTERIZATION OF THE EIF-3 COMPLEX</scope>
    <scope>MASS SPECTROMETRY</scope>
</reference>
<reference key="17">
    <citation type="journal article" date="2009" name="Anal. Chem.">
        <title>Lys-N and trypsin cover complementary parts of the phosphoproteome in a refined SCX-based approach.</title>
        <authorList>
            <person name="Gauci S."/>
            <person name="Helbig A.O."/>
            <person name="Slijper M."/>
            <person name="Krijgsveld J."/>
            <person name="Heck A.J."/>
            <person name="Mohammed S."/>
        </authorList>
    </citation>
    <scope>IDENTIFICATION BY MASS SPECTROMETRY [LARGE SCALE ANALYSIS]</scope>
</reference>
<reference key="18">
    <citation type="journal article" date="2009" name="Sci. Signal.">
        <title>Quantitative phosphoproteomic analysis of T cell receptor signaling reveals system-wide modulation of protein-protein interactions.</title>
        <authorList>
            <person name="Mayya V."/>
            <person name="Lundgren D.H."/>
            <person name="Hwang S.-I."/>
            <person name="Rezaul K."/>
            <person name="Wu L."/>
            <person name="Eng J.K."/>
            <person name="Rodionov V."/>
            <person name="Han D.K."/>
        </authorList>
    </citation>
    <scope>PHOSPHORYLATION [LARGE SCALE ANALYSIS] AT THR-38; THR-41 AND SER-42</scope>
    <scope>IDENTIFICATION BY MASS SPECTROMETRY [LARGE SCALE ANALYSIS]</scope>
    <source>
        <tissue>Leukemic T-cell</tissue>
    </source>
</reference>
<reference key="19">
    <citation type="journal article" date="2010" name="Sci. Signal.">
        <title>Quantitative phosphoproteomics reveals widespread full phosphorylation site occupancy during mitosis.</title>
        <authorList>
            <person name="Olsen J.V."/>
            <person name="Vermeulen M."/>
            <person name="Santamaria A."/>
            <person name="Kumar C."/>
            <person name="Miller M.L."/>
            <person name="Jensen L.J."/>
            <person name="Gnad F."/>
            <person name="Cox J."/>
            <person name="Jensen T.S."/>
            <person name="Nigg E.A."/>
            <person name="Brunak S."/>
            <person name="Mann M."/>
        </authorList>
    </citation>
    <scope>IDENTIFICATION BY MASS SPECTROMETRY [LARGE SCALE ANALYSIS]</scope>
    <source>
        <tissue>Cervix carcinoma</tissue>
    </source>
</reference>
<reference key="20">
    <citation type="journal article" date="2011" name="BMC Syst. Biol.">
        <title>Initial characterization of the human central proteome.</title>
        <authorList>
            <person name="Burkard T.R."/>
            <person name="Planyavsky M."/>
            <person name="Kaupe I."/>
            <person name="Breitwieser F.P."/>
            <person name="Buerckstuemmer T."/>
            <person name="Bennett K.L."/>
            <person name="Superti-Furga G."/>
            <person name="Colinge J."/>
        </authorList>
    </citation>
    <scope>IDENTIFICATION BY MASS SPECTROMETRY [LARGE SCALE ANALYSIS]</scope>
</reference>
<reference key="21">
    <citation type="journal article" date="2011" name="Sci. Signal.">
        <title>System-wide temporal characterization of the proteome and phosphoproteome of human embryonic stem cell differentiation.</title>
        <authorList>
            <person name="Rigbolt K.T."/>
            <person name="Prokhorova T.A."/>
            <person name="Akimov V."/>
            <person name="Henningsen J."/>
            <person name="Johansen P.T."/>
            <person name="Kratchmarova I."/>
            <person name="Kassem M."/>
            <person name="Mann M."/>
            <person name="Olsen J.V."/>
            <person name="Blagoev B."/>
        </authorList>
    </citation>
    <scope>IDENTIFICATION BY MASS SPECTROMETRY [LARGE SCALE ANALYSIS]</scope>
</reference>
<reference key="22">
    <citation type="journal article" date="2013" name="J. Proteome Res.">
        <title>Toward a comprehensive characterization of a human cancer cell phosphoproteome.</title>
        <authorList>
            <person name="Zhou H."/>
            <person name="Di Palma S."/>
            <person name="Preisinger C."/>
            <person name="Peng M."/>
            <person name="Polat A.N."/>
            <person name="Heck A.J."/>
            <person name="Mohammed S."/>
        </authorList>
    </citation>
    <scope>PHOSPHORYLATION [LARGE SCALE ANALYSIS] AT SER-8; THR-38; SER-223 AND SER-264</scope>
    <scope>IDENTIFICATION BY MASS SPECTROMETRY [LARGE SCALE ANALYSIS]</scope>
    <source>
        <tissue>Cervix carcinoma</tissue>
        <tissue>Erythroleukemia</tissue>
    </source>
</reference>
<reference key="23">
    <citation type="journal article" date="2014" name="J. Proteomics">
        <title>An enzyme assisted RP-RPLC approach for in-depth analysis of human liver phosphoproteome.</title>
        <authorList>
            <person name="Bian Y."/>
            <person name="Song C."/>
            <person name="Cheng K."/>
            <person name="Dong M."/>
            <person name="Wang F."/>
            <person name="Huang J."/>
            <person name="Sun D."/>
            <person name="Wang L."/>
            <person name="Ye M."/>
            <person name="Zou H."/>
        </authorList>
    </citation>
    <scope>PHOSPHORYLATION [LARGE SCALE ANALYSIS] AT SER-11 AND SER-189</scope>
    <scope>IDENTIFICATION BY MASS SPECTROMETRY [LARGE SCALE ANALYSIS]</scope>
    <source>
        <tissue>Liver</tissue>
    </source>
</reference>
<reference key="24">
    <citation type="journal article" date="2015" name="Mol. Cell. Biol.">
        <title>The DHX33 RNA Helicase Promotes mRNA Translation Initiation.</title>
        <authorList>
            <person name="Zhang Y."/>
            <person name="You J."/>
            <person name="Wang X."/>
            <person name="Weber J."/>
        </authorList>
    </citation>
    <scope>INTERACTION WITH DHX33</scope>
</reference>
<reference key="25">
    <citation type="journal article" date="2015" name="Nature">
        <title>eIF3 targets cell-proliferation messenger RNAs for translational activation or repression.</title>
        <authorList>
            <person name="Lee A.S."/>
            <person name="Kranzusch P.J."/>
            <person name="Cate J.H."/>
        </authorList>
    </citation>
    <scope>FUNCTION</scope>
    <scope>IDENTIFICATION IN THE EIF-3 COMPLEX</scope>
    <scope>RNA-BINDING</scope>
</reference>
<reference key="26">
    <citation type="journal article" date="2016" name="Nature">
        <title>eIF3d is an mRNA cap-binding protein that is required for specialized translation initiation.</title>
        <authorList>
            <person name="Lee A.S."/>
            <person name="Kranzusch P.J."/>
            <person name="Doudna J.A."/>
            <person name="Cate J.H."/>
        </authorList>
    </citation>
    <scope>FUNCTION</scope>
    <scope>RNA-BINDING</scope>
</reference>
<reference key="27">
    <citation type="journal article" date="2005" name="Science">
        <title>Structural roles for human translation factor eIF3 in initiation of protein synthesis.</title>
        <authorList>
            <person name="Siridechadilok B."/>
            <person name="Fraser C.S."/>
            <person name="Hall R.J."/>
            <person name="Doudna J.A."/>
            <person name="Nogales E."/>
        </authorList>
    </citation>
    <scope>3D-STRUCTURE MODELING</scope>
    <scope>ELECTRON MICROSCOPY</scope>
</reference>
<reference key="28">
    <citation type="submission" date="2005-11" db="PDB data bank">
        <title>Solution structure of RNA binding domain in eukaryotic translation initiation factor 3 subunit 4.</title>
        <authorList>
            <consortium name="RIKEN structural genomics initiative (RSGI)"/>
        </authorList>
    </citation>
    <scope>STRUCTURE BY NMR OF 231-320</scope>
</reference>
<evidence type="ECO:0000255" key="1">
    <source>
        <dbReference type="HAMAP-Rule" id="MF_03006"/>
    </source>
</evidence>
<evidence type="ECO:0000256" key="2">
    <source>
        <dbReference type="SAM" id="MobiDB-lite"/>
    </source>
</evidence>
<evidence type="ECO:0000269" key="3">
    <source>
    </source>
</evidence>
<evidence type="ECO:0000269" key="4">
    <source>
    </source>
</evidence>
<evidence type="ECO:0000269" key="5">
    <source>
    </source>
</evidence>
<evidence type="ECO:0000269" key="6">
    <source>
    </source>
</evidence>
<evidence type="ECO:0000269" key="7">
    <source>
    </source>
</evidence>
<evidence type="ECO:0000269" key="8">
    <source>
    </source>
</evidence>
<evidence type="ECO:0000269" key="9">
    <source>
    </source>
</evidence>
<evidence type="ECO:0000269" key="10">
    <source>
    </source>
</evidence>
<evidence type="ECO:0000269" key="11">
    <source>
    </source>
</evidence>
<evidence type="ECO:0000269" key="12">
    <source>
    </source>
</evidence>
<evidence type="ECO:0000269" key="13">
    <source>
    </source>
</evidence>
<evidence type="ECO:0000269" key="14">
    <source>
    </source>
</evidence>
<evidence type="ECO:0000269" key="15">
    <source>
    </source>
</evidence>
<evidence type="ECO:0000305" key="16"/>
<evidence type="ECO:0007744" key="17">
    <source>
    </source>
</evidence>
<evidence type="ECO:0007744" key="18">
    <source>
    </source>
</evidence>
<evidence type="ECO:0007744" key="19">
    <source>
    </source>
</evidence>
<evidence type="ECO:0007744" key="20">
    <source>
    </source>
</evidence>
<evidence type="ECO:0007829" key="21">
    <source>
        <dbReference type="PDB" id="2CQ0"/>
    </source>
</evidence>
<evidence type="ECO:0007829" key="22">
    <source>
        <dbReference type="PDB" id="2MJC"/>
    </source>
</evidence>
<evidence type="ECO:0007829" key="23">
    <source>
        <dbReference type="PDB" id="6YBS"/>
    </source>
</evidence>
<keyword id="KW-0002">3D-structure</keyword>
<keyword id="KW-0963">Cytoplasm</keyword>
<keyword id="KW-0903">Direct protein sequencing</keyword>
<keyword id="KW-0396">Initiation factor</keyword>
<keyword id="KW-0539">Nucleus</keyword>
<keyword id="KW-0597">Phosphoprotein</keyword>
<keyword id="KW-0648">Protein biosynthesis</keyword>
<keyword id="KW-1267">Proteomics identification</keyword>
<keyword id="KW-1185">Reference proteome</keyword>
<keyword id="KW-0694">RNA-binding</keyword>
<sequence>MPTGDFDSKPSWADQVEEEGEDDKCVTSELLKGIPLATGDTSPEPELLPGAPLPPPKEVINGNIKTVTEYKIDEDGKKFKIVRTFRIETRKASKAVARRKNWKKFGNSEFDPPGPNVATTTVSDDVSMTFITSKEDLNCQEEEDPMNKLKGQKIVSCRICKGDHWTTRCPYKDTLGPMQKELAEQLGLSTGEKEKLPGELEPVQATQNKTGKYVPPSLRDGASRRGESMQPNRRADDNATIRVTNLSEDTRETDLQELFRPFGSISRIYLAKDKTTGQSKGFAFISFHRREDAARAIAGVSGFGYDHLILNVEWAKPSTN</sequence>
<accession>O75821</accession>
<accession>O14801</accession>
<accession>Q969U5</accession>
<organism>
    <name type="scientific">Homo sapiens</name>
    <name type="common">Human</name>
    <dbReference type="NCBI Taxonomy" id="9606"/>
    <lineage>
        <taxon>Eukaryota</taxon>
        <taxon>Metazoa</taxon>
        <taxon>Chordata</taxon>
        <taxon>Craniata</taxon>
        <taxon>Vertebrata</taxon>
        <taxon>Euteleostomi</taxon>
        <taxon>Mammalia</taxon>
        <taxon>Eutheria</taxon>
        <taxon>Euarchontoglires</taxon>
        <taxon>Primates</taxon>
        <taxon>Haplorrhini</taxon>
        <taxon>Catarrhini</taxon>
        <taxon>Hominidae</taxon>
        <taxon>Homo</taxon>
    </lineage>
</organism>